<sequence>MAKLLQFNEEALKSILKGVKTLAKAVKVTLGPKGRNVVINKGFGSPLSTKDGVTVAKEVVLKDKFENMGAQLVNQVAAKTSDVAGDGTTTAIVLAEAIYSAGVKNVAAGANPMSLKRGIDQAVETITRSLDHLSTPVNTAQEVRQIATISANNDGEIGRIIGEAMERVGKDGIITVAEAKGIETHVDYVEGMQFDKGYVSPYFITNAEQMSVELSNADILITDKKLSAAKDIIPVLEKIMEKGARPLLIIAEDIDGEALATLVVNKLKAGMTVCAVKAPGFGDRRKAMLQDIAILTGGKVVSEEVGLKLDEVGPEVLGRAKTIKVSKEETTIIDGAGQSNEVKSRLAQIKAELANASTSKYDKEKLEERLAKMVGGVAVVNVGAATETELKEKKARVEDALHATRAAVAQGIVPGGGVALLRAVKSLEKLQLTGDEAIGVTIIKQAAFAPAIAIANNCGKQGNLIAEKIYEATGSYGYDGLTDEFKDLLKAGVIDPVLVTKSALINAASIAGLLLTTAAMITDKPQPKSQPAGMPGMDGMGGMGMGGMGGMGGMGMM</sequence>
<reference key="1">
    <citation type="journal article" date="2004" name="Science">
        <title>Illuminating the evolutionary history of chlamydiae.</title>
        <authorList>
            <person name="Horn M."/>
            <person name="Collingro A."/>
            <person name="Schmitz-Esser S."/>
            <person name="Beier C.L."/>
            <person name="Purkhold U."/>
            <person name="Fartmann B."/>
            <person name="Brandt P."/>
            <person name="Nyakatura G.J."/>
            <person name="Droege M."/>
            <person name="Frishman D."/>
            <person name="Rattei T."/>
            <person name="Mewes H.-W."/>
            <person name="Wagner M."/>
        </authorList>
    </citation>
    <scope>NUCLEOTIDE SEQUENCE [LARGE SCALE GENOMIC DNA]</scope>
    <source>
        <strain>UWE25</strain>
    </source>
</reference>
<dbReference type="EC" id="5.6.1.7" evidence="1"/>
<dbReference type="EMBL" id="BX908798">
    <property type="protein sequence ID" value="CAF22754.1"/>
    <property type="molecule type" value="Genomic_DNA"/>
</dbReference>
<dbReference type="RefSeq" id="WP_011174580.1">
    <property type="nucleotide sequence ID" value="NC_005861.2"/>
</dbReference>
<dbReference type="SMR" id="Q6MF95"/>
<dbReference type="STRING" id="264201.pc0030"/>
<dbReference type="KEGG" id="pcu:PC_RS00150"/>
<dbReference type="eggNOG" id="COG0459">
    <property type="taxonomic scope" value="Bacteria"/>
</dbReference>
<dbReference type="HOGENOM" id="CLU_016503_3_0_0"/>
<dbReference type="OrthoDB" id="9766614at2"/>
<dbReference type="Proteomes" id="UP000000529">
    <property type="component" value="Chromosome"/>
</dbReference>
<dbReference type="GO" id="GO:0005737">
    <property type="term" value="C:cytoplasm"/>
    <property type="evidence" value="ECO:0007669"/>
    <property type="project" value="UniProtKB-SubCell"/>
</dbReference>
<dbReference type="GO" id="GO:0005524">
    <property type="term" value="F:ATP binding"/>
    <property type="evidence" value="ECO:0007669"/>
    <property type="project" value="UniProtKB-UniRule"/>
</dbReference>
<dbReference type="GO" id="GO:0140662">
    <property type="term" value="F:ATP-dependent protein folding chaperone"/>
    <property type="evidence" value="ECO:0007669"/>
    <property type="project" value="InterPro"/>
</dbReference>
<dbReference type="GO" id="GO:0016853">
    <property type="term" value="F:isomerase activity"/>
    <property type="evidence" value="ECO:0007669"/>
    <property type="project" value="UniProtKB-KW"/>
</dbReference>
<dbReference type="GO" id="GO:0051082">
    <property type="term" value="F:unfolded protein binding"/>
    <property type="evidence" value="ECO:0007669"/>
    <property type="project" value="UniProtKB-UniRule"/>
</dbReference>
<dbReference type="GO" id="GO:0042026">
    <property type="term" value="P:protein refolding"/>
    <property type="evidence" value="ECO:0007669"/>
    <property type="project" value="UniProtKB-UniRule"/>
</dbReference>
<dbReference type="CDD" id="cd03344">
    <property type="entry name" value="GroEL"/>
    <property type="match status" value="1"/>
</dbReference>
<dbReference type="FunFam" id="3.50.7.10:FF:000001">
    <property type="entry name" value="60 kDa chaperonin"/>
    <property type="match status" value="1"/>
</dbReference>
<dbReference type="Gene3D" id="3.50.7.10">
    <property type="entry name" value="GroEL"/>
    <property type="match status" value="1"/>
</dbReference>
<dbReference type="Gene3D" id="1.10.560.10">
    <property type="entry name" value="GroEL-like equatorial domain"/>
    <property type="match status" value="1"/>
</dbReference>
<dbReference type="Gene3D" id="3.30.260.10">
    <property type="entry name" value="TCP-1-like chaperonin intermediate domain"/>
    <property type="match status" value="1"/>
</dbReference>
<dbReference type="HAMAP" id="MF_00600">
    <property type="entry name" value="CH60"/>
    <property type="match status" value="1"/>
</dbReference>
<dbReference type="InterPro" id="IPR001844">
    <property type="entry name" value="Cpn60/GroEL"/>
</dbReference>
<dbReference type="InterPro" id="IPR002423">
    <property type="entry name" value="Cpn60/GroEL/TCP-1"/>
</dbReference>
<dbReference type="InterPro" id="IPR027409">
    <property type="entry name" value="GroEL-like_apical_dom_sf"/>
</dbReference>
<dbReference type="InterPro" id="IPR027413">
    <property type="entry name" value="GROEL-like_equatorial_sf"/>
</dbReference>
<dbReference type="InterPro" id="IPR027410">
    <property type="entry name" value="TCP-1-like_intermed_sf"/>
</dbReference>
<dbReference type="NCBIfam" id="TIGR02348">
    <property type="entry name" value="GroEL"/>
    <property type="match status" value="1"/>
</dbReference>
<dbReference type="NCBIfam" id="NF000592">
    <property type="entry name" value="PRK00013.1"/>
    <property type="match status" value="1"/>
</dbReference>
<dbReference type="NCBIfam" id="NF009487">
    <property type="entry name" value="PRK12849.1"/>
    <property type="match status" value="1"/>
</dbReference>
<dbReference type="NCBIfam" id="NF009488">
    <property type="entry name" value="PRK12850.1"/>
    <property type="match status" value="1"/>
</dbReference>
<dbReference type="NCBIfam" id="NF009489">
    <property type="entry name" value="PRK12851.1"/>
    <property type="match status" value="1"/>
</dbReference>
<dbReference type="PANTHER" id="PTHR45633">
    <property type="entry name" value="60 KDA HEAT SHOCK PROTEIN, MITOCHONDRIAL"/>
    <property type="match status" value="1"/>
</dbReference>
<dbReference type="Pfam" id="PF00118">
    <property type="entry name" value="Cpn60_TCP1"/>
    <property type="match status" value="1"/>
</dbReference>
<dbReference type="PRINTS" id="PR00298">
    <property type="entry name" value="CHAPERONIN60"/>
</dbReference>
<dbReference type="SUPFAM" id="SSF52029">
    <property type="entry name" value="GroEL apical domain-like"/>
    <property type="match status" value="1"/>
</dbReference>
<dbReference type="SUPFAM" id="SSF48592">
    <property type="entry name" value="GroEL equatorial domain-like"/>
    <property type="match status" value="1"/>
</dbReference>
<dbReference type="SUPFAM" id="SSF54849">
    <property type="entry name" value="GroEL-intermediate domain like"/>
    <property type="match status" value="1"/>
</dbReference>
<accession>Q6MF95</accession>
<feature type="chain" id="PRO_0000063471" description="Chaperonin GroEL 1">
    <location>
        <begin position="1"/>
        <end position="557"/>
    </location>
</feature>
<feature type="binding site" evidence="1">
    <location>
        <begin position="29"/>
        <end position="32"/>
    </location>
    <ligand>
        <name>ATP</name>
        <dbReference type="ChEBI" id="CHEBI:30616"/>
    </ligand>
</feature>
<feature type="binding site" evidence="1">
    <location>
        <position position="50"/>
    </location>
    <ligand>
        <name>ATP</name>
        <dbReference type="ChEBI" id="CHEBI:30616"/>
    </ligand>
</feature>
<feature type="binding site" evidence="1">
    <location>
        <begin position="86"/>
        <end position="90"/>
    </location>
    <ligand>
        <name>ATP</name>
        <dbReference type="ChEBI" id="CHEBI:30616"/>
    </ligand>
</feature>
<feature type="binding site" evidence="1">
    <location>
        <position position="416"/>
    </location>
    <ligand>
        <name>ATP</name>
        <dbReference type="ChEBI" id="CHEBI:30616"/>
    </ligand>
</feature>
<feature type="binding site" evidence="1">
    <location>
        <position position="495"/>
    </location>
    <ligand>
        <name>ATP</name>
        <dbReference type="ChEBI" id="CHEBI:30616"/>
    </ligand>
</feature>
<gene>
    <name evidence="1" type="primary">groEL1</name>
    <name evidence="1" type="synonym">groL1</name>
    <name type="ordered locus">pc0030</name>
</gene>
<evidence type="ECO:0000255" key="1">
    <source>
        <dbReference type="HAMAP-Rule" id="MF_00600"/>
    </source>
</evidence>
<keyword id="KW-0067">ATP-binding</keyword>
<keyword id="KW-0143">Chaperone</keyword>
<keyword id="KW-0963">Cytoplasm</keyword>
<keyword id="KW-0413">Isomerase</keyword>
<keyword id="KW-0547">Nucleotide-binding</keyword>
<keyword id="KW-1185">Reference proteome</keyword>
<comment type="function">
    <text evidence="1">Together with its co-chaperonin GroES, plays an essential role in assisting protein folding. The GroEL-GroES system forms a nano-cage that allows encapsulation of the non-native substrate proteins and provides a physical environment optimized to promote and accelerate protein folding.</text>
</comment>
<comment type="catalytic activity">
    <reaction evidence="1">
        <text>ATP + H2O + a folded polypeptide = ADP + phosphate + an unfolded polypeptide.</text>
        <dbReference type="EC" id="5.6.1.7"/>
    </reaction>
</comment>
<comment type="subunit">
    <text evidence="1">Forms a cylinder of 14 subunits composed of two heptameric rings stacked back-to-back. Interacts with the co-chaperonin GroES.</text>
</comment>
<comment type="subcellular location">
    <subcellularLocation>
        <location evidence="1">Cytoplasm</location>
    </subcellularLocation>
</comment>
<comment type="similarity">
    <text evidence="1">Belongs to the chaperonin (HSP60) family.</text>
</comment>
<proteinExistence type="inferred from homology"/>
<protein>
    <recommendedName>
        <fullName evidence="1">Chaperonin GroEL 1</fullName>
        <ecNumber evidence="1">5.6.1.7</ecNumber>
    </recommendedName>
    <alternativeName>
        <fullName evidence="1">60 kDa chaperonin 1</fullName>
    </alternativeName>
    <alternativeName>
        <fullName evidence="1">Chaperonin-60 1</fullName>
        <shortName evidence="1">Cpn60 1</shortName>
    </alternativeName>
</protein>
<organism>
    <name type="scientific">Protochlamydia amoebophila (strain UWE25)</name>
    <dbReference type="NCBI Taxonomy" id="264201"/>
    <lineage>
        <taxon>Bacteria</taxon>
        <taxon>Pseudomonadati</taxon>
        <taxon>Chlamydiota</taxon>
        <taxon>Chlamydiia</taxon>
        <taxon>Parachlamydiales</taxon>
        <taxon>Parachlamydiaceae</taxon>
        <taxon>Candidatus Protochlamydia</taxon>
    </lineage>
</organism>
<name>CH601_PARUW</name>